<sequence>MDVGELLEDVLRIYSPSHGEADLAKYLLEYLKRFVPDVWIDEAGNVIAVKGSGGPVVWLHAHMDTVPGPLPVKREGGVVWGRGAVDDKGPLVAYLKAFLDSNPRGTLVLALVTAEEDDSAGTEALLRGGPPRPDYVFVGEPTNLHIAYAYRGGAKVYIELESRGGHASSPIYDNIVEELFAVYQEVKRALGHAERYDAFTVTPTIIQCGEAPNKVPTKCVMVLDVRIPPGKSCRDLAQALPPKARAGPCTEPVEVSPTNPAARALTRALLKLGVEPKLSRKWGTADFNLLVSLTKNIAAFGPGDPALAHSEDERIDIAQVELAAKALKLAVEELGIIPRRL</sequence>
<organism>
    <name type="scientific">Pyrobaculum aerophilum (strain ATCC 51768 / DSM 7523 / JCM 9630 / CIP 104966 / NBRC 100827 / IM2)</name>
    <dbReference type="NCBI Taxonomy" id="178306"/>
    <lineage>
        <taxon>Archaea</taxon>
        <taxon>Thermoproteota</taxon>
        <taxon>Thermoprotei</taxon>
        <taxon>Thermoproteales</taxon>
        <taxon>Thermoproteaceae</taxon>
        <taxon>Pyrobaculum</taxon>
    </lineage>
</organism>
<reference key="1">
    <citation type="journal article" date="2002" name="Proc. Natl. Acad. Sci. U.S.A.">
        <title>Genome sequence of the hyperthermophilic crenarchaeon Pyrobaculum aerophilum.</title>
        <authorList>
            <person name="Fitz-Gibbon S.T."/>
            <person name="Ladner H."/>
            <person name="Kim U.-J."/>
            <person name="Stetter K.O."/>
            <person name="Simon M.I."/>
            <person name="Miller J.H."/>
        </authorList>
    </citation>
    <scope>NUCLEOTIDE SEQUENCE [LARGE SCALE GENOMIC DNA]</scope>
    <source>
        <strain>ATCC 51768 / DSM 7523 / JCM 9630 / CIP 104966 / NBRC 100827 / IM2</strain>
    </source>
</reference>
<gene>
    <name evidence="1" type="primary">lysK</name>
    <name type="ordered locus">PAE2798</name>
</gene>
<comment type="function">
    <text evidence="1">Catalyzes the release of L-lysine from [LysW]-gamma-L-lysine and the release of L-ornithine from [LysW]-L-ornithine.</text>
</comment>
<comment type="catalytic activity">
    <reaction evidence="1">
        <text>[amino-group carrier protein]-C-terminal-gamma-(L-lysyl)-L-glutamate + H2O = [amino-group carrier protein]-C-terminal-L-glutamate + L-lysine</text>
        <dbReference type="Rhea" id="RHEA:48684"/>
        <dbReference type="Rhea" id="RHEA-COMP:9693"/>
        <dbReference type="Rhea" id="RHEA-COMP:9715"/>
        <dbReference type="ChEBI" id="CHEBI:15377"/>
        <dbReference type="ChEBI" id="CHEBI:32551"/>
        <dbReference type="ChEBI" id="CHEBI:78525"/>
        <dbReference type="ChEBI" id="CHEBI:78526"/>
        <dbReference type="EC" id="3.5.1.130"/>
    </reaction>
</comment>
<comment type="catalytic activity">
    <reaction evidence="1">
        <text>[amino-group carrier protein]-C-terminal-gamma-(L-ornithyl)-L-glutamate + H2O = [amino-group carrier protein]-C-terminal-L-glutamate + L-ornithine</text>
        <dbReference type="Rhea" id="RHEA:52676"/>
        <dbReference type="Rhea" id="RHEA-COMP:9693"/>
        <dbReference type="Rhea" id="RHEA-COMP:13328"/>
        <dbReference type="ChEBI" id="CHEBI:15377"/>
        <dbReference type="ChEBI" id="CHEBI:46911"/>
        <dbReference type="ChEBI" id="CHEBI:78525"/>
        <dbReference type="ChEBI" id="CHEBI:136763"/>
        <dbReference type="EC" id="3.5.1.132"/>
    </reaction>
</comment>
<comment type="cofactor">
    <cofactor evidence="1">
        <name>Zn(2+)</name>
        <dbReference type="ChEBI" id="CHEBI:29105"/>
    </cofactor>
    <cofactor evidence="1">
        <name>Co(2+)</name>
        <dbReference type="ChEBI" id="CHEBI:48828"/>
    </cofactor>
    <text evidence="1">Binds 2 Zn(2+) or Co(2+) ions per subunit.</text>
</comment>
<comment type="pathway">
    <text evidence="1">Amino-acid biosynthesis; L-lysine biosynthesis via AAA pathway; L-lysine from L-alpha-aminoadipate (Thermus route): step 5/5.</text>
</comment>
<comment type="pathway">
    <text evidence="1">Amino-acid biosynthesis; L-arginine biosynthesis.</text>
</comment>
<comment type="subcellular location">
    <subcellularLocation>
        <location evidence="1">Cytoplasm</location>
    </subcellularLocation>
</comment>
<comment type="similarity">
    <text evidence="1">Belongs to the peptidase M20A family. LysK subfamily.</text>
</comment>
<dbReference type="EC" id="3.5.1.130" evidence="1"/>
<dbReference type="EC" id="3.5.1.132" evidence="1"/>
<dbReference type="EMBL" id="AE009441">
    <property type="protein sequence ID" value="AAL64445.1"/>
    <property type="molecule type" value="Genomic_DNA"/>
</dbReference>
<dbReference type="RefSeq" id="WP_011008913.1">
    <property type="nucleotide sequence ID" value="NC_003364.1"/>
</dbReference>
<dbReference type="SMR" id="Q8ZUG2"/>
<dbReference type="FunCoup" id="Q8ZUG2">
    <property type="interactions" value="76"/>
</dbReference>
<dbReference type="STRING" id="178306.PAE2798"/>
<dbReference type="EnsemblBacteria" id="AAL64445">
    <property type="protein sequence ID" value="AAL64445"/>
    <property type="gene ID" value="PAE2798"/>
</dbReference>
<dbReference type="GeneID" id="1463606"/>
<dbReference type="KEGG" id="pai:PAE2798"/>
<dbReference type="PATRIC" id="fig|178306.9.peg.2088"/>
<dbReference type="eggNOG" id="arCOG01107">
    <property type="taxonomic scope" value="Archaea"/>
</dbReference>
<dbReference type="HOGENOM" id="CLU_021802_2_0_2"/>
<dbReference type="InParanoid" id="Q8ZUG2"/>
<dbReference type="UniPathway" id="UPA00033">
    <property type="reaction ID" value="UER00039"/>
</dbReference>
<dbReference type="UniPathway" id="UPA00068"/>
<dbReference type="Proteomes" id="UP000002439">
    <property type="component" value="Chromosome"/>
</dbReference>
<dbReference type="GO" id="GO:0005737">
    <property type="term" value="C:cytoplasm"/>
    <property type="evidence" value="ECO:0007669"/>
    <property type="project" value="UniProtKB-SubCell"/>
</dbReference>
<dbReference type="GO" id="GO:0050897">
    <property type="term" value="F:cobalt ion binding"/>
    <property type="evidence" value="ECO:0007669"/>
    <property type="project" value="UniProtKB-UniRule"/>
</dbReference>
<dbReference type="GO" id="GO:0016811">
    <property type="term" value="F:hydrolase activity, acting on carbon-nitrogen (but not peptide) bonds, in linear amides"/>
    <property type="evidence" value="ECO:0007669"/>
    <property type="project" value="UniProtKB-UniRule"/>
</dbReference>
<dbReference type="GO" id="GO:0008270">
    <property type="term" value="F:zinc ion binding"/>
    <property type="evidence" value="ECO:0007669"/>
    <property type="project" value="UniProtKB-UniRule"/>
</dbReference>
<dbReference type="GO" id="GO:0042450">
    <property type="term" value="P:arginine biosynthetic process via ornithine"/>
    <property type="evidence" value="ECO:0007669"/>
    <property type="project" value="UniProtKB-UniRule"/>
</dbReference>
<dbReference type="GO" id="GO:0006526">
    <property type="term" value="P:L-arginine biosynthetic process"/>
    <property type="evidence" value="ECO:0007669"/>
    <property type="project" value="UniProtKB-UniPathway"/>
</dbReference>
<dbReference type="GO" id="GO:0019878">
    <property type="term" value="P:lysine biosynthetic process via aminoadipic acid"/>
    <property type="evidence" value="ECO:0007669"/>
    <property type="project" value="UniProtKB-UniRule"/>
</dbReference>
<dbReference type="CDD" id="cd05653">
    <property type="entry name" value="M20_ArgE_LysK"/>
    <property type="match status" value="1"/>
</dbReference>
<dbReference type="Gene3D" id="3.30.70.360">
    <property type="match status" value="1"/>
</dbReference>
<dbReference type="Gene3D" id="3.40.630.10">
    <property type="entry name" value="Zn peptidases"/>
    <property type="match status" value="1"/>
</dbReference>
<dbReference type="HAMAP" id="MF_01120">
    <property type="entry name" value="LysK"/>
    <property type="match status" value="1"/>
</dbReference>
<dbReference type="InterPro" id="IPR036264">
    <property type="entry name" value="Bact_exopeptidase_dim_dom"/>
</dbReference>
<dbReference type="InterPro" id="IPR010175">
    <property type="entry name" value="LysK"/>
</dbReference>
<dbReference type="InterPro" id="IPR002933">
    <property type="entry name" value="Peptidase_M20"/>
</dbReference>
<dbReference type="InterPro" id="IPR011650">
    <property type="entry name" value="Peptidase_M20_dimer"/>
</dbReference>
<dbReference type="InterPro" id="IPR050072">
    <property type="entry name" value="Peptidase_M20A"/>
</dbReference>
<dbReference type="NCBIfam" id="TIGR01902">
    <property type="entry name" value="dapE-lys-deAc"/>
    <property type="match status" value="1"/>
</dbReference>
<dbReference type="PANTHER" id="PTHR43808:SF28">
    <property type="entry name" value="[LYSW]-LYSINE_[LYSW]-ORNITHINE HYDROLASE"/>
    <property type="match status" value="1"/>
</dbReference>
<dbReference type="PANTHER" id="PTHR43808">
    <property type="entry name" value="ACETYLORNITHINE DEACETYLASE"/>
    <property type="match status" value="1"/>
</dbReference>
<dbReference type="Pfam" id="PF07687">
    <property type="entry name" value="M20_dimer"/>
    <property type="match status" value="1"/>
</dbReference>
<dbReference type="Pfam" id="PF01546">
    <property type="entry name" value="Peptidase_M20"/>
    <property type="match status" value="1"/>
</dbReference>
<dbReference type="SUPFAM" id="SSF55031">
    <property type="entry name" value="Bacterial exopeptidase dimerisation domain"/>
    <property type="match status" value="1"/>
</dbReference>
<dbReference type="SUPFAM" id="SSF53187">
    <property type="entry name" value="Zn-dependent exopeptidases"/>
    <property type="match status" value="1"/>
</dbReference>
<protein>
    <recommendedName>
        <fullName evidence="1">Putative [LysW]-lysine/[LysW]-ornithine hydrolase</fullName>
        <ecNumber evidence="1">3.5.1.130</ecNumber>
        <ecNumber evidence="1">3.5.1.132</ecNumber>
    </recommendedName>
</protein>
<evidence type="ECO:0000255" key="1">
    <source>
        <dbReference type="HAMAP-Rule" id="MF_01120"/>
    </source>
</evidence>
<proteinExistence type="inferred from homology"/>
<feature type="chain" id="PRO_0000185346" description="Putative [LysW]-lysine/[LysW]-ornithine hydrolase">
    <location>
        <begin position="1"/>
        <end position="341"/>
    </location>
</feature>
<feature type="active site" evidence="1">
    <location>
        <position position="64"/>
    </location>
</feature>
<feature type="active site" description="Proton acceptor" evidence="1">
    <location>
        <position position="115"/>
    </location>
</feature>
<feature type="binding site" evidence="1">
    <location>
        <position position="62"/>
    </location>
    <ligand>
        <name>Zn(2+)</name>
        <dbReference type="ChEBI" id="CHEBI:29105"/>
        <label>1</label>
    </ligand>
</feature>
<feature type="binding site" evidence="1">
    <location>
        <position position="86"/>
    </location>
    <ligand>
        <name>Zn(2+)</name>
        <dbReference type="ChEBI" id="CHEBI:29105"/>
        <label>1</label>
    </ligand>
</feature>
<feature type="binding site" evidence="1">
    <location>
        <position position="86"/>
    </location>
    <ligand>
        <name>Zn(2+)</name>
        <dbReference type="ChEBI" id="CHEBI:29105"/>
        <label>2</label>
    </ligand>
</feature>
<feature type="binding site" evidence="1">
    <location>
        <position position="116"/>
    </location>
    <ligand>
        <name>Zn(2+)</name>
        <dbReference type="ChEBI" id="CHEBI:29105"/>
        <label>2</label>
    </ligand>
</feature>
<feature type="binding site" evidence="1">
    <location>
        <position position="140"/>
    </location>
    <ligand>
        <name>Zn(2+)</name>
        <dbReference type="ChEBI" id="CHEBI:29105"/>
        <label>1</label>
    </ligand>
</feature>
<feature type="binding site" evidence="1">
    <location>
        <position position="309"/>
    </location>
    <ligand>
        <name>Zn(2+)</name>
        <dbReference type="ChEBI" id="CHEBI:29105"/>
        <label>2</label>
    </ligand>
</feature>
<keyword id="KW-0028">Amino-acid biosynthesis</keyword>
<keyword id="KW-0055">Arginine biosynthesis</keyword>
<keyword id="KW-0170">Cobalt</keyword>
<keyword id="KW-0963">Cytoplasm</keyword>
<keyword id="KW-0378">Hydrolase</keyword>
<keyword id="KW-0457">Lysine biosynthesis</keyword>
<keyword id="KW-0479">Metal-binding</keyword>
<keyword id="KW-1185">Reference proteome</keyword>
<keyword id="KW-0862">Zinc</keyword>
<accession>Q8ZUG2</accession>
<name>LYSK_PYRAE</name>